<feature type="chain" id="PRO_0000195005" description="Ribosome biogenesis protein bms1">
    <location>
        <begin position="1"/>
        <end position="1121"/>
    </location>
</feature>
<feature type="domain" description="Bms1-type G" evidence="3">
    <location>
        <begin position="72"/>
        <end position="237"/>
    </location>
</feature>
<feature type="region of interest" description="Disordered" evidence="4">
    <location>
        <begin position="1"/>
        <end position="33"/>
    </location>
</feature>
<feature type="region of interest" description="G1" evidence="3">
    <location>
        <begin position="81"/>
        <end position="88"/>
    </location>
</feature>
<feature type="region of interest" description="G2" evidence="3">
    <location>
        <begin position="109"/>
        <end position="113"/>
    </location>
</feature>
<feature type="region of interest" description="G3" evidence="3">
    <location>
        <begin position="124"/>
        <end position="127"/>
    </location>
</feature>
<feature type="region of interest" description="G4" evidence="3">
    <location>
        <begin position="176"/>
        <end position="179"/>
    </location>
</feature>
<feature type="region of interest" description="G5" evidence="3">
    <location>
        <begin position="211"/>
        <end position="220"/>
    </location>
</feature>
<feature type="region of interest" description="Rcl1-binding" evidence="1">
    <location>
        <begin position="498"/>
        <end position="523"/>
    </location>
</feature>
<feature type="region of interest" description="Disordered" evidence="4">
    <location>
        <begin position="603"/>
        <end position="665"/>
    </location>
</feature>
<feature type="region of interest" description="Disordered" evidence="4">
    <location>
        <begin position="1060"/>
        <end position="1085"/>
    </location>
</feature>
<feature type="region of interest" description="Disordered" evidence="4">
    <location>
        <begin position="1099"/>
        <end position="1121"/>
    </location>
</feature>
<feature type="compositionally biased region" description="Basic residues" evidence="4">
    <location>
        <begin position="7"/>
        <end position="22"/>
    </location>
</feature>
<feature type="compositionally biased region" description="Acidic residues" evidence="4">
    <location>
        <begin position="605"/>
        <end position="635"/>
    </location>
</feature>
<feature type="compositionally biased region" description="Acidic residues" evidence="4">
    <location>
        <begin position="644"/>
        <end position="654"/>
    </location>
</feature>
<feature type="compositionally biased region" description="Basic and acidic residues" evidence="4">
    <location>
        <begin position="655"/>
        <end position="665"/>
    </location>
</feature>
<feature type="compositionally biased region" description="Low complexity" evidence="4">
    <location>
        <begin position="1110"/>
        <end position="1121"/>
    </location>
</feature>
<feature type="binding site" evidence="2">
    <location>
        <begin position="81"/>
        <end position="88"/>
    </location>
    <ligand>
        <name>ATP</name>
        <dbReference type="ChEBI" id="CHEBI:30616"/>
    </ligand>
</feature>
<feature type="modified residue" description="Phosphoserine" evidence="6">
    <location>
        <position position="438"/>
    </location>
</feature>
<feature type="modified residue" description="Phosphoserine" evidence="6">
    <location>
        <position position="442"/>
    </location>
</feature>
<feature type="modified residue" description="Phosphoserine" evidence="6">
    <location>
        <position position="464"/>
    </location>
</feature>
<feature type="modified residue" description="Phosphoserine" evidence="6">
    <location>
        <position position="474"/>
    </location>
</feature>
<feature type="modified residue" description="Phosphoserine" evidence="6">
    <location>
        <position position="476"/>
    </location>
</feature>
<feature type="modified residue" description="Phosphoserine" evidence="6">
    <location>
        <position position="546"/>
    </location>
</feature>
<keyword id="KW-0067">ATP-binding</keyword>
<keyword id="KW-0963">Cytoplasm</keyword>
<keyword id="KW-0206">Cytoskeleton</keyword>
<keyword id="KW-0342">GTP-binding</keyword>
<keyword id="KW-0378">Hydrolase</keyword>
<keyword id="KW-0547">Nucleotide-binding</keyword>
<keyword id="KW-0539">Nucleus</keyword>
<keyword id="KW-0597">Phosphoprotein</keyword>
<keyword id="KW-1185">Reference proteome</keyword>
<keyword id="KW-0690">Ribosome biogenesis</keyword>
<organism>
    <name type="scientific">Schizosaccharomyces pombe (strain 972 / ATCC 24843)</name>
    <name type="common">Fission yeast</name>
    <dbReference type="NCBI Taxonomy" id="284812"/>
    <lineage>
        <taxon>Eukaryota</taxon>
        <taxon>Fungi</taxon>
        <taxon>Dikarya</taxon>
        <taxon>Ascomycota</taxon>
        <taxon>Taphrinomycotina</taxon>
        <taxon>Schizosaccharomycetes</taxon>
        <taxon>Schizosaccharomycetales</taxon>
        <taxon>Schizosaccharomycetaceae</taxon>
        <taxon>Schizosaccharomyces</taxon>
    </lineage>
</organism>
<accession>O94653</accession>
<accession>Q9HGM0</accession>
<protein>
    <recommendedName>
        <fullName evidence="1">Ribosome biogenesis protein bms1</fullName>
        <ecNumber evidence="1">3.6.5.-</ecNumber>
    </recommendedName>
</protein>
<gene>
    <name type="primary">bms1</name>
    <name type="ORF">SPBC31E1.06</name>
    <name type="ORF">SPBC800.01</name>
</gene>
<sequence>MDEKKGHYAKHSGPKAEKKKLKKVSDGSASNNPKAFAVASAGRMARQAMRTADISQKKLHVPMVDRTPDEAPPPVIVAVMGPPGTGKSTLIKSLVRRYSKYTISQITGPITVVAGKKRRITFLECPNDLSSMIDVAKIADLVLLLIDANFGFEMETMEFLNILAPHGMPRIMGVLTHLDLFKKTSTLREAKKRLKHRFWTELYQGAKLFYLSGVLNGRYPDREILNLSRFISVMKFRPLRWRNQHPYLLADRMEDLTLPVDIEQNPKVGRKITLYGYLHGTNLPKHDASVHIPGVGDFVTSDVSSLEDPCPPPDADKVRRRRLSEKQKLIYGPMADIGGILFDKDRVYIEVPTSNFSKDENSEAGFGERMVMQLQEAQQPLGVDGNSGLQLFSNSDAIDTVDRESSEIDNVGRKTRRQPTGLINQELIKEDEGAFDDSDVNSADENEDVDFTGKIGAINNEDESDNEEVAFADSDSDLGGQFDDEDSNLRWKEGLASKAALAYSQSGKRRRNIQKIFYDESLSPKDAYAEYKGESAKSSESDLVVSDDEEDFFKVSKVANESISSNHEKLMESESDRLSKKWENPQLLAQLKSRFITGSLLDSIEGQEEVSQDDEEGDFEDLEDEENSSDNEMEESSGSSVTAENEESADEVDFQTEREENARKKEELRLRFEEEDRGDPEKKDVDWYTEEKEKIARQLVINREAFEDMDPESRAEIEGYRAGTYVRIVINDVPFEFVEHFDSRYPVVVGGLLPNEQRYGLVQVRIKRHRWHKKILKTNDPLIFSMGWRRFQSIPVYSISDSRTRNRMLKYTPEHMHCFGTFYGPFVAPNSGFCAVQSVANSFAKAGSFRIAATGSVLNIDQSTDIVKKLKLTGVPYKIFKNTAFIKKMFSSPLEVAKFEGANIRTVSGIRGQVKKAVDQEHGHFRATFEDKILMSDIVFLRAWYPVQVRKFCTMVTNLLETDKTEWNGMRLTGEVRHELGLKTPLRPNSQYQEIVRPSRHFNPLKVPASLQAQLPFNSRQKALRPRSKPTYMQKRTVLLNAEERKVRDLLQKVMTLHTDKEAKRKAKKAAEHERYHKRMQKEEQAYIEKKREEKAEWFAQHGKRLRQDGNSSGSGKRSKN</sequence>
<reference key="1">
    <citation type="journal article" date="2002" name="Nature">
        <title>The genome sequence of Schizosaccharomyces pombe.</title>
        <authorList>
            <person name="Wood V."/>
            <person name="Gwilliam R."/>
            <person name="Rajandream M.A."/>
            <person name="Lyne M.H."/>
            <person name="Lyne R."/>
            <person name="Stewart A."/>
            <person name="Sgouros J.G."/>
            <person name="Peat N."/>
            <person name="Hayles J."/>
            <person name="Baker S.G."/>
            <person name="Basham D."/>
            <person name="Bowman S."/>
            <person name="Brooks K."/>
            <person name="Brown D."/>
            <person name="Brown S."/>
            <person name="Chillingworth T."/>
            <person name="Churcher C.M."/>
            <person name="Collins M."/>
            <person name="Connor R."/>
            <person name="Cronin A."/>
            <person name="Davis P."/>
            <person name="Feltwell T."/>
            <person name="Fraser A."/>
            <person name="Gentles S."/>
            <person name="Goble A."/>
            <person name="Hamlin N."/>
            <person name="Harris D.E."/>
            <person name="Hidalgo J."/>
            <person name="Hodgson G."/>
            <person name="Holroyd S."/>
            <person name="Hornsby T."/>
            <person name="Howarth S."/>
            <person name="Huckle E.J."/>
            <person name="Hunt S."/>
            <person name="Jagels K."/>
            <person name="James K.D."/>
            <person name="Jones L."/>
            <person name="Jones M."/>
            <person name="Leather S."/>
            <person name="McDonald S."/>
            <person name="McLean J."/>
            <person name="Mooney P."/>
            <person name="Moule S."/>
            <person name="Mungall K.L."/>
            <person name="Murphy L.D."/>
            <person name="Niblett D."/>
            <person name="Odell C."/>
            <person name="Oliver K."/>
            <person name="O'Neil S."/>
            <person name="Pearson D."/>
            <person name="Quail M.A."/>
            <person name="Rabbinowitsch E."/>
            <person name="Rutherford K.M."/>
            <person name="Rutter S."/>
            <person name="Saunders D."/>
            <person name="Seeger K."/>
            <person name="Sharp S."/>
            <person name="Skelton J."/>
            <person name="Simmonds M.N."/>
            <person name="Squares R."/>
            <person name="Squares S."/>
            <person name="Stevens K."/>
            <person name="Taylor K."/>
            <person name="Taylor R.G."/>
            <person name="Tivey A."/>
            <person name="Walsh S.V."/>
            <person name="Warren T."/>
            <person name="Whitehead S."/>
            <person name="Woodward J.R."/>
            <person name="Volckaert G."/>
            <person name="Aert R."/>
            <person name="Robben J."/>
            <person name="Grymonprez B."/>
            <person name="Weltjens I."/>
            <person name="Vanstreels E."/>
            <person name="Rieger M."/>
            <person name="Schaefer M."/>
            <person name="Mueller-Auer S."/>
            <person name="Gabel C."/>
            <person name="Fuchs M."/>
            <person name="Duesterhoeft A."/>
            <person name="Fritzc C."/>
            <person name="Holzer E."/>
            <person name="Moestl D."/>
            <person name="Hilbert H."/>
            <person name="Borzym K."/>
            <person name="Langer I."/>
            <person name="Beck A."/>
            <person name="Lehrach H."/>
            <person name="Reinhardt R."/>
            <person name="Pohl T.M."/>
            <person name="Eger P."/>
            <person name="Zimmermann W."/>
            <person name="Wedler H."/>
            <person name="Wambutt R."/>
            <person name="Purnelle B."/>
            <person name="Goffeau A."/>
            <person name="Cadieu E."/>
            <person name="Dreano S."/>
            <person name="Gloux S."/>
            <person name="Lelaure V."/>
            <person name="Mottier S."/>
            <person name="Galibert F."/>
            <person name="Aves S.J."/>
            <person name="Xiang Z."/>
            <person name="Hunt C."/>
            <person name="Moore K."/>
            <person name="Hurst S.M."/>
            <person name="Lucas M."/>
            <person name="Rochet M."/>
            <person name="Gaillardin C."/>
            <person name="Tallada V.A."/>
            <person name="Garzon A."/>
            <person name="Thode G."/>
            <person name="Daga R.R."/>
            <person name="Cruzado L."/>
            <person name="Jimenez J."/>
            <person name="Sanchez M."/>
            <person name="del Rey F."/>
            <person name="Benito J."/>
            <person name="Dominguez A."/>
            <person name="Revuelta J.L."/>
            <person name="Moreno S."/>
            <person name="Armstrong J."/>
            <person name="Forsburg S.L."/>
            <person name="Cerutti L."/>
            <person name="Lowe T."/>
            <person name="McCombie W.R."/>
            <person name="Paulsen I."/>
            <person name="Potashkin J."/>
            <person name="Shpakovski G.V."/>
            <person name="Ussery D."/>
            <person name="Barrell B.G."/>
            <person name="Nurse P."/>
        </authorList>
    </citation>
    <scope>NUCLEOTIDE SEQUENCE [LARGE SCALE GENOMIC DNA]</scope>
    <source>
        <strain>972 / ATCC 24843</strain>
    </source>
</reference>
<reference key="2">
    <citation type="journal article" date="2006" name="Nat. Biotechnol.">
        <title>ORFeome cloning and global analysis of protein localization in the fission yeast Schizosaccharomyces pombe.</title>
        <authorList>
            <person name="Matsuyama A."/>
            <person name="Arai R."/>
            <person name="Yashiroda Y."/>
            <person name="Shirai A."/>
            <person name="Kamata A."/>
            <person name="Sekido S."/>
            <person name="Kobayashi Y."/>
            <person name="Hashimoto A."/>
            <person name="Hamamoto M."/>
            <person name="Hiraoka Y."/>
            <person name="Horinouchi S."/>
            <person name="Yoshida M."/>
        </authorList>
    </citation>
    <scope>SUBCELLULAR LOCATION [LARGE SCALE ANALYSIS]</scope>
</reference>
<reference key="3">
    <citation type="journal article" date="2008" name="J. Proteome Res.">
        <title>Phosphoproteome analysis of fission yeast.</title>
        <authorList>
            <person name="Wilson-Grady J.T."/>
            <person name="Villen J."/>
            <person name="Gygi S.P."/>
        </authorList>
    </citation>
    <scope>PHOSPHORYLATION [LARGE SCALE ANALYSIS] AT SER-438; SER-442; SER-464; SER-474; SER-476 AND SER-546</scope>
    <scope>IDENTIFICATION BY MASS SPECTROMETRY</scope>
</reference>
<evidence type="ECO:0000250" key="1">
    <source>
        <dbReference type="UniProtKB" id="Q08965"/>
    </source>
</evidence>
<evidence type="ECO:0000255" key="2"/>
<evidence type="ECO:0000255" key="3">
    <source>
        <dbReference type="PROSITE-ProRule" id="PRU01051"/>
    </source>
</evidence>
<evidence type="ECO:0000256" key="4">
    <source>
        <dbReference type="SAM" id="MobiDB-lite"/>
    </source>
</evidence>
<evidence type="ECO:0000269" key="5">
    <source>
    </source>
</evidence>
<evidence type="ECO:0000269" key="6">
    <source>
    </source>
</evidence>
<evidence type="ECO:0000305" key="7"/>
<comment type="function">
    <text evidence="1">GTPase required for synthesis of 40S ribosomal subunits and for processing the 35S pre-rRNA at sites A0, A1, and A2 (By similarity). Controls access of pre-ribosomal RNA intermediates to RCL1 during ribosome biogenesis by binding of rc11 in a GTP-dependent manner and, via its affinity to U3 snoRNA, delivering it to pre-ribosomes (By similarity). GTP-binding and/or GTP hydrolysis may induce conformational rearrangements within the bms1-rcl1 complex allowing the interaction of rcl1 with its RNA substrate (By similarity). Required for rcl11 import into the nucleus (By similarity).</text>
</comment>
<comment type="catalytic activity">
    <reaction evidence="1">
        <text>GTP + H2O = GDP + phosphate + H(+)</text>
        <dbReference type="Rhea" id="RHEA:19669"/>
        <dbReference type="ChEBI" id="CHEBI:15377"/>
        <dbReference type="ChEBI" id="CHEBI:15378"/>
        <dbReference type="ChEBI" id="CHEBI:37565"/>
        <dbReference type="ChEBI" id="CHEBI:43474"/>
        <dbReference type="ChEBI" id="CHEBI:58189"/>
    </reaction>
    <physiologicalReaction direction="left-to-right" evidence="1">
        <dbReference type="Rhea" id="RHEA:19670"/>
    </physiologicalReaction>
</comment>
<comment type="subunit">
    <text evidence="1">Interacts directly with rcl1 and the U3 snoRNA to form a stable subcomplex (By similarity). Component of the 90S small subunit processome also known as 90S pre-ribosome that consists of the 35S pre-rRNA, early-associating ribosomal proteins most of which are part of the small ribosomal subunit, the U3 snoRNA and associated proteins (By similarity).</text>
</comment>
<comment type="subcellular location">
    <subcellularLocation>
        <location evidence="5">Nucleus</location>
        <location evidence="5">Nucleolus</location>
    </subcellularLocation>
    <subcellularLocation>
        <location evidence="5">Cytoplasm</location>
        <location evidence="5">Cytoskeleton</location>
        <location evidence="5">Spindle</location>
    </subcellularLocation>
</comment>
<comment type="similarity">
    <text evidence="7">Belongs to the TRAFAC class translation factor GTPase superfamily. Bms1-like GTPase family. BMS1 subfamily.</text>
</comment>
<name>BMS1_SCHPO</name>
<dbReference type="EC" id="3.6.5.-" evidence="1"/>
<dbReference type="EMBL" id="CU329671">
    <property type="protein sequence ID" value="CAB39140.2"/>
    <property type="molecule type" value="Genomic_DNA"/>
</dbReference>
<dbReference type="RefSeq" id="NP_595102.2">
    <property type="nucleotide sequence ID" value="NM_001021009.2"/>
</dbReference>
<dbReference type="SMR" id="O94653"/>
<dbReference type="BioGRID" id="276918">
    <property type="interactions" value="3"/>
</dbReference>
<dbReference type="FunCoup" id="O94653">
    <property type="interactions" value="1150"/>
</dbReference>
<dbReference type="STRING" id="284812.O94653"/>
<dbReference type="iPTMnet" id="O94653"/>
<dbReference type="PaxDb" id="4896-SPBC31E1.06.1"/>
<dbReference type="EnsemblFungi" id="SPBC31E1.06.1">
    <property type="protein sequence ID" value="SPBC31E1.06.1:pep"/>
    <property type="gene ID" value="SPBC31E1.06"/>
</dbReference>
<dbReference type="GeneID" id="2540390"/>
<dbReference type="KEGG" id="spo:2540390"/>
<dbReference type="PomBase" id="SPBC31E1.06">
    <property type="gene designation" value="bms1"/>
</dbReference>
<dbReference type="VEuPathDB" id="FungiDB:SPBC31E1.06"/>
<dbReference type="eggNOG" id="KOG1951">
    <property type="taxonomic scope" value="Eukaryota"/>
</dbReference>
<dbReference type="HOGENOM" id="CLU_002486_0_0_1"/>
<dbReference type="InParanoid" id="O94653"/>
<dbReference type="OMA" id="KLHVPMV"/>
<dbReference type="PhylomeDB" id="O94653"/>
<dbReference type="Reactome" id="R-SPO-6791226">
    <property type="pathway name" value="Major pathway of rRNA processing in the nucleolus and cytosol"/>
</dbReference>
<dbReference type="PRO" id="PR:O94653"/>
<dbReference type="Proteomes" id="UP000002485">
    <property type="component" value="Chromosome II"/>
</dbReference>
<dbReference type="GO" id="GO:0005737">
    <property type="term" value="C:cytoplasm"/>
    <property type="evidence" value="ECO:0000250"/>
    <property type="project" value="PomBase"/>
</dbReference>
<dbReference type="GO" id="GO:0072686">
    <property type="term" value="C:mitotic spindle"/>
    <property type="evidence" value="ECO:0007005"/>
    <property type="project" value="PomBase"/>
</dbReference>
<dbReference type="GO" id="GO:0005730">
    <property type="term" value="C:nucleolus"/>
    <property type="evidence" value="ECO:0007005"/>
    <property type="project" value="PomBase"/>
</dbReference>
<dbReference type="GO" id="GO:0005634">
    <property type="term" value="C:nucleus"/>
    <property type="evidence" value="ECO:0007005"/>
    <property type="project" value="PomBase"/>
</dbReference>
<dbReference type="GO" id="GO:0005524">
    <property type="term" value="F:ATP binding"/>
    <property type="evidence" value="ECO:0007669"/>
    <property type="project" value="UniProtKB-KW"/>
</dbReference>
<dbReference type="GO" id="GO:0005525">
    <property type="term" value="F:GTP binding"/>
    <property type="evidence" value="ECO:0000318"/>
    <property type="project" value="GO_Central"/>
</dbReference>
<dbReference type="GO" id="GO:0003924">
    <property type="term" value="F:GTPase activity"/>
    <property type="evidence" value="ECO:0000318"/>
    <property type="project" value="GO_Central"/>
</dbReference>
<dbReference type="GO" id="GO:0034511">
    <property type="term" value="F:U3 snoRNA binding"/>
    <property type="evidence" value="ECO:0000318"/>
    <property type="project" value="GO_Central"/>
</dbReference>
<dbReference type="GO" id="GO:0000479">
    <property type="term" value="P:endonucleolytic cleavage of tricistronic rRNA transcript (SSU-rRNA, 5.8S rRNA, LSU-rRNA)"/>
    <property type="evidence" value="ECO:0000318"/>
    <property type="project" value="GO_Central"/>
</dbReference>
<dbReference type="GO" id="GO:0000462">
    <property type="term" value="P:maturation of SSU-rRNA from tricistronic rRNA transcript (SSU-rRNA, 5.8S rRNA, LSU-rRNA)"/>
    <property type="evidence" value="ECO:0000318"/>
    <property type="project" value="GO_Central"/>
</dbReference>
<dbReference type="GO" id="GO:0042255">
    <property type="term" value="P:ribosome assembly"/>
    <property type="evidence" value="ECO:0000250"/>
    <property type="project" value="PomBase"/>
</dbReference>
<dbReference type="CDD" id="cd01882">
    <property type="entry name" value="BMS1"/>
    <property type="match status" value="1"/>
</dbReference>
<dbReference type="FunFam" id="3.40.50.300:FF:000105">
    <property type="entry name" value="BMS1 ribosome biogenesis factor"/>
    <property type="match status" value="1"/>
</dbReference>
<dbReference type="Gene3D" id="3.40.50.300">
    <property type="entry name" value="P-loop containing nucleotide triphosphate hydrolases"/>
    <property type="match status" value="1"/>
</dbReference>
<dbReference type="InterPro" id="IPR012948">
    <property type="entry name" value="AARP2CN"/>
</dbReference>
<dbReference type="InterPro" id="IPR039761">
    <property type="entry name" value="Bms1/Tsr1"/>
</dbReference>
<dbReference type="InterPro" id="IPR037875">
    <property type="entry name" value="Bms1_N"/>
</dbReference>
<dbReference type="InterPro" id="IPR007034">
    <property type="entry name" value="BMS1_TSR1_C"/>
</dbReference>
<dbReference type="InterPro" id="IPR030387">
    <property type="entry name" value="G_Bms1/Tsr1_dom"/>
</dbReference>
<dbReference type="InterPro" id="IPR027417">
    <property type="entry name" value="P-loop_NTPase"/>
</dbReference>
<dbReference type="PANTHER" id="PTHR12858">
    <property type="entry name" value="RIBOSOME BIOGENESIS PROTEIN"/>
    <property type="match status" value="1"/>
</dbReference>
<dbReference type="PANTHER" id="PTHR12858:SF2">
    <property type="entry name" value="RIBOSOME BIOGENESIS PROTEIN BMS1 HOMOLOG"/>
    <property type="match status" value="1"/>
</dbReference>
<dbReference type="Pfam" id="PF08142">
    <property type="entry name" value="AARP2CN"/>
    <property type="match status" value="1"/>
</dbReference>
<dbReference type="Pfam" id="PF04950">
    <property type="entry name" value="RIBIOP_C"/>
    <property type="match status" value="1"/>
</dbReference>
<dbReference type="SMART" id="SM00785">
    <property type="entry name" value="AARP2CN"/>
    <property type="match status" value="1"/>
</dbReference>
<dbReference type="SMART" id="SM01362">
    <property type="entry name" value="DUF663"/>
    <property type="match status" value="1"/>
</dbReference>
<dbReference type="SUPFAM" id="SSF52540">
    <property type="entry name" value="P-loop containing nucleoside triphosphate hydrolases"/>
    <property type="match status" value="1"/>
</dbReference>
<dbReference type="PROSITE" id="PS51714">
    <property type="entry name" value="G_BMS1"/>
    <property type="match status" value="1"/>
</dbReference>
<proteinExistence type="evidence at protein level"/>